<dbReference type="EMBL" id="AY653733">
    <property type="protein sequence ID" value="AAV50711.1"/>
    <property type="molecule type" value="Genomic_DNA"/>
</dbReference>
<dbReference type="SMR" id="Q5UQP3"/>
<dbReference type="KEGG" id="vg:9925069"/>
<dbReference type="OrthoDB" id="10051at10239"/>
<dbReference type="Proteomes" id="UP000001134">
    <property type="component" value="Genome"/>
</dbReference>
<dbReference type="CDD" id="cd06257">
    <property type="entry name" value="DnaJ"/>
    <property type="match status" value="1"/>
</dbReference>
<dbReference type="Gene3D" id="1.10.287.110">
    <property type="entry name" value="DnaJ domain"/>
    <property type="match status" value="1"/>
</dbReference>
<dbReference type="InterPro" id="IPR050817">
    <property type="entry name" value="DjlA_DnaK_co-chaperone"/>
</dbReference>
<dbReference type="InterPro" id="IPR001623">
    <property type="entry name" value="DnaJ_domain"/>
</dbReference>
<dbReference type="InterPro" id="IPR018253">
    <property type="entry name" value="DnaJ_domain_CS"/>
</dbReference>
<dbReference type="InterPro" id="IPR036869">
    <property type="entry name" value="J_dom_sf"/>
</dbReference>
<dbReference type="PANTHER" id="PTHR24074">
    <property type="entry name" value="CO-CHAPERONE PROTEIN DJLA"/>
    <property type="match status" value="1"/>
</dbReference>
<dbReference type="Pfam" id="PF00226">
    <property type="entry name" value="DnaJ"/>
    <property type="match status" value="1"/>
</dbReference>
<dbReference type="SMART" id="SM00271">
    <property type="entry name" value="DnaJ"/>
    <property type="match status" value="1"/>
</dbReference>
<dbReference type="SUPFAM" id="SSF46565">
    <property type="entry name" value="Chaperone J-domain"/>
    <property type="match status" value="1"/>
</dbReference>
<dbReference type="PROSITE" id="PS00636">
    <property type="entry name" value="DNAJ_1"/>
    <property type="match status" value="1"/>
</dbReference>
<dbReference type="PROSITE" id="PS50076">
    <property type="entry name" value="DNAJ_2"/>
    <property type="match status" value="1"/>
</dbReference>
<organism>
    <name type="scientific">Acanthamoeba polyphaga mimivirus</name>
    <name type="common">APMV</name>
    <dbReference type="NCBI Taxonomy" id="212035"/>
    <lineage>
        <taxon>Viruses</taxon>
        <taxon>Varidnaviria</taxon>
        <taxon>Bamfordvirae</taxon>
        <taxon>Nucleocytoviricota</taxon>
        <taxon>Megaviricetes</taxon>
        <taxon>Imitervirales</taxon>
        <taxon>Mimiviridae</taxon>
        <taxon>Megamimivirinae</taxon>
        <taxon>Mimivirus</taxon>
        <taxon>Mimivirus bradfordmassiliense</taxon>
    </lineage>
</organism>
<sequence length="368" mass="42221">MSVEYKQKNDVPDLYKILGLTNDVCKESDCDERIRKAYARKAKKYHPDKYPGKKDIVEIFELITMAYDVLKDEKQRNEYNQRLIVEKQACSDYLKLKKRYNDFADSIGELKEPSNEQKLSFKEQMKAINSKHGYDTSQETAIPANQAKKKLSSLAKERASQDVNLRPEKLFDDGRFDLGTFNAVFDKYHKKSDSSIMPHNGVPSAWNEPTNSMNFSSFDNLDNIYVDDNSRLDISRQMFGDIDFGSSLPKISKQDISDIGRADYVDGHKVLGDDYYKDLKSKISEREKDSDLFDKMKYGDYKKDTAGYGVLDQLGCDFSEIYLDKCLPGSLEEQVEKLMAERKKVIPPTEFQYLSAPVSSRTNGSVGR</sequence>
<gene>
    <name type="ordered locus">MIMI_R445</name>
</gene>
<reference key="1">
    <citation type="journal article" date="2004" name="Science">
        <title>The 1.2-megabase genome sequence of Mimivirus.</title>
        <authorList>
            <person name="Raoult D."/>
            <person name="Audic S."/>
            <person name="Robert C."/>
            <person name="Abergel C."/>
            <person name="Renesto P."/>
            <person name="Ogata H."/>
            <person name="La Scola B."/>
            <person name="Susan M."/>
            <person name="Claverie J.-M."/>
        </authorList>
    </citation>
    <scope>NUCLEOTIDE SEQUENCE [LARGE SCALE GENOMIC DNA]</scope>
    <source>
        <strain>Rowbotham-Bradford</strain>
    </source>
</reference>
<organismHost>
    <name type="scientific">Acanthamoeba polyphaga</name>
    <name type="common">Amoeba</name>
    <dbReference type="NCBI Taxonomy" id="5757"/>
</organismHost>
<proteinExistence type="predicted"/>
<evidence type="ECO:0000255" key="1">
    <source>
        <dbReference type="PROSITE-ProRule" id="PRU00286"/>
    </source>
</evidence>
<accession>Q5UQP3</accession>
<feature type="chain" id="PRO_0000071167" description="Putative J domain-containing protein R445">
    <location>
        <begin position="1"/>
        <end position="368"/>
    </location>
</feature>
<feature type="domain" description="J" evidence="1">
    <location>
        <begin position="13"/>
        <end position="83"/>
    </location>
</feature>
<name>YR445_MIMIV</name>
<keyword id="KW-0143">Chaperone</keyword>
<keyword id="KW-1185">Reference proteome</keyword>
<protein>
    <recommendedName>
        <fullName>Putative J domain-containing protein R445</fullName>
    </recommendedName>
</protein>